<organismHost>
    <name type="scientific">Homo sapiens</name>
    <name type="common">Human</name>
    <dbReference type="NCBI Taxonomy" id="9606"/>
</organismHost>
<accession>Q82044</accession>
<proteinExistence type="evidence at transcript level"/>
<evidence type="ECO:0000255" key="1">
    <source>
        <dbReference type="HAMAP-Rule" id="MF_04088"/>
    </source>
</evidence>
<name>NSP1_ROTHM</name>
<protein>
    <recommendedName>
        <fullName evidence="1">Non-structural protein 1</fullName>
        <shortName evidence="1">NSP1</shortName>
    </recommendedName>
    <alternativeName>
        <fullName evidence="1">NCVP2</fullName>
    </alternativeName>
    <alternativeName>
        <fullName evidence="1">Non-structural RNA-binding protein 53</fullName>
        <shortName evidence="1">NS53</shortName>
    </alternativeName>
</protein>
<dbReference type="EMBL" id="U11491">
    <property type="protein sequence ID" value="AAA75584.1"/>
    <property type="molecule type" value="mRNA"/>
</dbReference>
<dbReference type="SMR" id="Q82044"/>
<dbReference type="GO" id="GO:0030430">
    <property type="term" value="C:host cell cytoplasm"/>
    <property type="evidence" value="ECO:0007669"/>
    <property type="project" value="UniProtKB-UniRule"/>
</dbReference>
<dbReference type="GO" id="GO:0044163">
    <property type="term" value="C:host cytoskeleton"/>
    <property type="evidence" value="ECO:0007669"/>
    <property type="project" value="UniProtKB-SubCell"/>
</dbReference>
<dbReference type="GO" id="GO:0046872">
    <property type="term" value="F:metal ion binding"/>
    <property type="evidence" value="ECO:0007669"/>
    <property type="project" value="UniProtKB-UniRule"/>
</dbReference>
<dbReference type="GO" id="GO:0003723">
    <property type="term" value="F:RNA binding"/>
    <property type="evidence" value="ECO:0007669"/>
    <property type="project" value="UniProtKB-UniRule"/>
</dbReference>
<dbReference type="GO" id="GO:0039548">
    <property type="term" value="P:symbiont-mediated suppression of host cytoplasmic pattern recognition receptor signaling pathway via inhibition of IRF3 activity"/>
    <property type="evidence" value="ECO:0007669"/>
    <property type="project" value="UniProtKB-UniRule"/>
</dbReference>
<dbReference type="GO" id="GO:0039557">
    <property type="term" value="P:symbiont-mediated suppression of host cytoplasmic pattern recognition receptor signaling pathway via inhibition of IRF7 activity"/>
    <property type="evidence" value="ECO:0007669"/>
    <property type="project" value="UniProtKB-UniRule"/>
</dbReference>
<dbReference type="GO" id="GO:0085034">
    <property type="term" value="P:symbiont-mediated suppression of host NF-kappaB cascade"/>
    <property type="evidence" value="ECO:0007669"/>
    <property type="project" value="UniProtKB-UniRule"/>
</dbReference>
<dbReference type="HAMAP" id="MF_04088">
    <property type="entry name" value="ROTA_NSP1"/>
    <property type="match status" value="1"/>
</dbReference>
<dbReference type="InterPro" id="IPR002148">
    <property type="entry name" value="Rotavirus_NSP1"/>
</dbReference>
<dbReference type="Pfam" id="PF00981">
    <property type="entry name" value="Rota_NS53"/>
    <property type="match status" value="1"/>
</dbReference>
<keyword id="KW-1035">Host cytoplasm</keyword>
<keyword id="KW-1037">Host cytoskeleton</keyword>
<keyword id="KW-0945">Host-virus interaction</keyword>
<keyword id="KW-1090">Inhibition of host innate immune response by virus</keyword>
<keyword id="KW-1092">Inhibition of host IRF3 by virus</keyword>
<keyword id="KW-1093">Inhibition of host IRF7 by virus</keyword>
<keyword id="KW-1100">Inhibition of host NF-kappa-B by virus</keyword>
<keyword id="KW-1113">Inhibition of host RLR pathway by virus</keyword>
<keyword id="KW-0922">Interferon antiviral system evasion</keyword>
<keyword id="KW-0479">Metal-binding</keyword>
<keyword id="KW-0597">Phosphoprotein</keyword>
<keyword id="KW-0694">RNA-binding</keyword>
<keyword id="KW-0899">Viral immunoevasion</keyword>
<reference key="1">
    <citation type="journal article" date="1994" name="J. Gen. Virol.">
        <title>Genetic analysis of NSP1 genes of human rotaviruses isolated from neonates with asymptomatic infection.</title>
        <authorList>
            <person name="Palombo E.A."/>
            <person name="Bishop R.F."/>
        </authorList>
    </citation>
    <scope>NUCLEOTIDE SEQUENCE [MRNA]</scope>
</reference>
<comment type="function">
    <text evidence="1">Plays a role in the inhibition of host innate immunity by inducing the degradation of key host factors required to activate interferon production such as IRF3, IRF5 or IRF7. Associates with components of cullin RING ligases (CRLs) including CUL1 or CUL3, which are essential multisubunit ubiquitination complexes, to modulate their activities. Recognizes the host NF-kappa-B regulator BTRC through the presence of a DSGXS motif in the C-terminal substrate recognition domain.</text>
</comment>
<comment type="subunit">
    <text evidence="1">Interacts (via C-terminus) with host IRF3; this interaction leads to IRF3 degradation. Interacts with host IRF7; this interaction leads to IRF7 degradation. Interacts with host CUL1 and CUL3. Interacts with host BTRC.</text>
</comment>
<comment type="subcellular location">
    <subcellularLocation>
        <location evidence="1">Host cytoplasm</location>
        <location evidence="1">Host cytoskeleton</location>
    </subcellularLocation>
</comment>
<comment type="domain">
    <text evidence="1">The integrity of the zinc-binding domain in NSP1 is important for degradation of host IRF3.</text>
</comment>
<comment type="domain">
    <text evidence="1">The pLxIS motif targets host IRF3 for degradation; however phosphorylation of NSP1 pLxIS motif is not required for its activity.</text>
</comment>
<comment type="PTM">
    <text evidence="1">The C-terminal region is phosphorylated by host CKII/CSNK2A1. Phosphorylation of the DSGXS motif is essential for host NF-kappa-B inhibition.</text>
</comment>
<comment type="similarity">
    <text evidence="1">Belongs to the rotavirus NSP1 family.</text>
</comment>
<feature type="chain" id="PRO_0000369089" description="Non-structural protein 1">
    <location>
        <begin position="1"/>
        <end position="486"/>
    </location>
</feature>
<feature type="region of interest" description="RNA-binding" evidence="1">
    <location>
        <begin position="1"/>
        <end position="81"/>
    </location>
</feature>
<feature type="region of interest" description="Zinc-binding domain" evidence="1">
    <location>
        <begin position="42"/>
        <end position="79"/>
    </location>
</feature>
<feature type="region of interest" description="Important for cytoskeleton localization" evidence="1">
    <location>
        <begin position="82"/>
        <end position="176"/>
    </location>
</feature>
<feature type="region of interest" description="Interaction with host IRF3" evidence="1">
    <location>
        <begin position="317"/>
        <end position="486"/>
    </location>
</feature>
<feature type="short sequence motif" description="IKBKB-like degron (ILD) motif" evidence="1">
    <location>
        <begin position="479"/>
        <end position="483"/>
    </location>
</feature>
<feature type="short sequence motif" description="pLxIS motif" evidence="1">
    <location>
        <begin position="480"/>
        <end position="483"/>
    </location>
</feature>
<sequence>MATFKDTCYYYKRINKLNHAVLKLGVIDTWRPSPLTKYKGWCLDCCQHTDLTYCRGCTMYHDCQWCSQYGRCFLDSEPHLLRMRTFKNEVTKNDLMNLIDMYDTLFPINQRIVDKFMNSTRQHKCRNECITQWYNHLLMPITLQSLSVELDGDVYYVFGYYDSMSEINQTPFSFTNLIDMYDKLLLDNINFNRMSFLPVALQQEYALRYFSKSRFISEKRKCVSDLHFSANVIENLHNPSFKIQITRNCSDLSSDWNGVCKLVKDVSAYFNVLKTSHIEFYSISTRCRVFTQHKLKIASKHIKPNYVTSNHKTSATEVHNCKWCSINNSYTVWNDFRVKKIYDNIFNFLRALVKSNANVGHCSSQEKIYEYIKDVLDVCDDEKWKIAVTEIFNCLEPVELNNVKYALFNHEVNWDVINLLVQSVDKAPQILTLNDIVIIMKSIIYEWFDIRYMRNTPMTTFTVDKLRRLCTGVKTVDYDSGISDVE</sequence>
<organism>
    <name type="scientific">Rotavirus A (strain RVA/Human/Venezuela/M37/1982/G1P2A[6])</name>
    <name type="common">RV-A</name>
    <dbReference type="NCBI Taxonomy" id="10954"/>
    <lineage>
        <taxon>Viruses</taxon>
        <taxon>Riboviria</taxon>
        <taxon>Orthornavirae</taxon>
        <taxon>Duplornaviricota</taxon>
        <taxon>Resentoviricetes</taxon>
        <taxon>Reovirales</taxon>
        <taxon>Sedoreoviridae</taxon>
        <taxon>Rotavirus</taxon>
        <taxon>Rotavirus A</taxon>
    </lineage>
</organism>